<organism>
    <name type="scientific">Proteus mirabilis (strain HI4320)</name>
    <dbReference type="NCBI Taxonomy" id="529507"/>
    <lineage>
        <taxon>Bacteria</taxon>
        <taxon>Pseudomonadati</taxon>
        <taxon>Pseudomonadota</taxon>
        <taxon>Gammaproteobacteria</taxon>
        <taxon>Enterobacterales</taxon>
        <taxon>Morganellaceae</taxon>
        <taxon>Proteus</taxon>
    </lineage>
</organism>
<gene>
    <name evidence="1" type="primary">metG</name>
    <name type="ordered locus">PMI0646</name>
</gene>
<evidence type="ECO:0000255" key="1">
    <source>
        <dbReference type="HAMAP-Rule" id="MF_00098"/>
    </source>
</evidence>
<accession>B4ESY6</accession>
<proteinExistence type="inferred from homology"/>
<name>SYM_PROMH</name>
<reference key="1">
    <citation type="journal article" date="2008" name="J. Bacteriol.">
        <title>Complete genome sequence of uropathogenic Proteus mirabilis, a master of both adherence and motility.</title>
        <authorList>
            <person name="Pearson M.M."/>
            <person name="Sebaihia M."/>
            <person name="Churcher C."/>
            <person name="Quail M.A."/>
            <person name="Seshasayee A.S."/>
            <person name="Luscombe N.M."/>
            <person name="Abdellah Z."/>
            <person name="Arrosmith C."/>
            <person name="Atkin B."/>
            <person name="Chillingworth T."/>
            <person name="Hauser H."/>
            <person name="Jagels K."/>
            <person name="Moule S."/>
            <person name="Mungall K."/>
            <person name="Norbertczak H."/>
            <person name="Rabbinowitsch E."/>
            <person name="Walker D."/>
            <person name="Whithead S."/>
            <person name="Thomson N.R."/>
            <person name="Rather P.N."/>
            <person name="Parkhill J."/>
            <person name="Mobley H.L.T."/>
        </authorList>
    </citation>
    <scope>NUCLEOTIDE SEQUENCE [LARGE SCALE GENOMIC DNA]</scope>
    <source>
        <strain>HI4320</strain>
    </source>
</reference>
<keyword id="KW-0030">Aminoacyl-tRNA synthetase</keyword>
<keyword id="KW-0067">ATP-binding</keyword>
<keyword id="KW-0963">Cytoplasm</keyword>
<keyword id="KW-0436">Ligase</keyword>
<keyword id="KW-0479">Metal-binding</keyword>
<keyword id="KW-0547">Nucleotide-binding</keyword>
<keyword id="KW-0648">Protein biosynthesis</keyword>
<keyword id="KW-1185">Reference proteome</keyword>
<keyword id="KW-0694">RNA-binding</keyword>
<keyword id="KW-0820">tRNA-binding</keyword>
<keyword id="KW-0862">Zinc</keyword>
<protein>
    <recommendedName>
        <fullName evidence="1">Methionine--tRNA ligase</fullName>
        <ecNumber evidence="1">6.1.1.10</ecNumber>
    </recommendedName>
    <alternativeName>
        <fullName evidence="1">Methionyl-tRNA synthetase</fullName>
        <shortName evidence="1">MetRS</shortName>
    </alternativeName>
</protein>
<feature type="chain" id="PRO_1000093723" description="Methionine--tRNA ligase">
    <location>
        <begin position="1"/>
        <end position="675"/>
    </location>
</feature>
<feature type="domain" description="tRNA-binding" evidence="1">
    <location>
        <begin position="573"/>
        <end position="675"/>
    </location>
</feature>
<feature type="short sequence motif" description="'HIGH' region">
    <location>
        <begin position="15"/>
        <end position="25"/>
    </location>
</feature>
<feature type="short sequence motif" description="'KMSKS' region">
    <location>
        <begin position="332"/>
        <end position="336"/>
    </location>
</feature>
<feature type="binding site" evidence="1">
    <location>
        <position position="146"/>
    </location>
    <ligand>
        <name>Zn(2+)</name>
        <dbReference type="ChEBI" id="CHEBI:29105"/>
    </ligand>
</feature>
<feature type="binding site" evidence="1">
    <location>
        <position position="149"/>
    </location>
    <ligand>
        <name>Zn(2+)</name>
        <dbReference type="ChEBI" id="CHEBI:29105"/>
    </ligand>
</feature>
<feature type="binding site" evidence="1">
    <location>
        <position position="159"/>
    </location>
    <ligand>
        <name>Zn(2+)</name>
        <dbReference type="ChEBI" id="CHEBI:29105"/>
    </ligand>
</feature>
<feature type="binding site" evidence="1">
    <location>
        <position position="162"/>
    </location>
    <ligand>
        <name>Zn(2+)</name>
        <dbReference type="ChEBI" id="CHEBI:29105"/>
    </ligand>
</feature>
<feature type="binding site" evidence="1">
    <location>
        <position position="335"/>
    </location>
    <ligand>
        <name>ATP</name>
        <dbReference type="ChEBI" id="CHEBI:30616"/>
    </ligand>
</feature>
<sequence length="675" mass="76453">MSHVANKLLVTCALPYANGSIHLGHILEHIQADIWVRYQRMRGKEVHFICADDAHGTPIMLKAQQLGITPEAMIEEMSKEHQQDFAGFNISYDNYHSTHSEENRQLSTKIYLALKKNGHIKSKTISQLYDEEKGMFLPDRFVKGTCPKCKAPDQYGDNCEVCGSTYSPTELINPRSVVSGSTPVMRETEHYFFDLPAFSNMLQEWIRSGALQEQVANKMQEWFDSGLQQWDITRDAPYFGFEIPDAPGKYFYVWLDAPIGYMGSFLNLCEKRGDLSFDEFWNKESKTDLYHFIGKDIVYFHSLFWPAVLEGSEYRKPTNLFVHGYVTVNGAKMSKSRGTFITARAYLDHFDADCLRYYYAAKLSSRIDDIDLNLEDFVQRVNSDIVNKVVNLASRTAGFISKRFDGKLAANLDDAKLYQHFVDMQESIAQCFENREFGKAIREIMALADEANRYIDEKAPWVVAKQEGKEAELQAICTMGINLFRVLMTYLKPILPSLTERSEAFLQTELTWNALSQPLLNHEITKFKALFNRIEMDKANAMVEASKSTIAPVKEITGPLADAPIQETIKFDDFAKIDMRIAEIKQADFVDGSDKLLKLILDLGGETRQVFSGIRSAYPDPKVLEGRLTVMVANLAPRKMRFGISEGMVMAAGPGGEDIFLLSPDSGAKPGHQVK</sequence>
<dbReference type="EC" id="6.1.1.10" evidence="1"/>
<dbReference type="EMBL" id="AM942759">
    <property type="protein sequence ID" value="CAR41525.1"/>
    <property type="molecule type" value="Genomic_DNA"/>
</dbReference>
<dbReference type="RefSeq" id="WP_004252094.1">
    <property type="nucleotide sequence ID" value="NC_010554.1"/>
</dbReference>
<dbReference type="SMR" id="B4ESY6"/>
<dbReference type="EnsemblBacteria" id="CAR41525">
    <property type="protein sequence ID" value="CAR41525"/>
    <property type="gene ID" value="PMI0646"/>
</dbReference>
<dbReference type="GeneID" id="6802022"/>
<dbReference type="KEGG" id="pmr:PMI0646"/>
<dbReference type="PATRIC" id="fig|529507.6.peg.630"/>
<dbReference type="eggNOG" id="COG0073">
    <property type="taxonomic scope" value="Bacteria"/>
</dbReference>
<dbReference type="eggNOG" id="COG0143">
    <property type="taxonomic scope" value="Bacteria"/>
</dbReference>
<dbReference type="HOGENOM" id="CLU_009710_7_0_6"/>
<dbReference type="Proteomes" id="UP000008319">
    <property type="component" value="Chromosome"/>
</dbReference>
<dbReference type="GO" id="GO:0005829">
    <property type="term" value="C:cytosol"/>
    <property type="evidence" value="ECO:0007669"/>
    <property type="project" value="TreeGrafter"/>
</dbReference>
<dbReference type="GO" id="GO:0005524">
    <property type="term" value="F:ATP binding"/>
    <property type="evidence" value="ECO:0007669"/>
    <property type="project" value="UniProtKB-UniRule"/>
</dbReference>
<dbReference type="GO" id="GO:0046872">
    <property type="term" value="F:metal ion binding"/>
    <property type="evidence" value="ECO:0007669"/>
    <property type="project" value="UniProtKB-KW"/>
</dbReference>
<dbReference type="GO" id="GO:0004825">
    <property type="term" value="F:methionine-tRNA ligase activity"/>
    <property type="evidence" value="ECO:0007669"/>
    <property type="project" value="UniProtKB-UniRule"/>
</dbReference>
<dbReference type="GO" id="GO:0000049">
    <property type="term" value="F:tRNA binding"/>
    <property type="evidence" value="ECO:0007669"/>
    <property type="project" value="UniProtKB-KW"/>
</dbReference>
<dbReference type="GO" id="GO:0006431">
    <property type="term" value="P:methionyl-tRNA aminoacylation"/>
    <property type="evidence" value="ECO:0007669"/>
    <property type="project" value="UniProtKB-UniRule"/>
</dbReference>
<dbReference type="CDD" id="cd07957">
    <property type="entry name" value="Anticodon_Ia_Met"/>
    <property type="match status" value="1"/>
</dbReference>
<dbReference type="CDD" id="cd00814">
    <property type="entry name" value="MetRS_core"/>
    <property type="match status" value="1"/>
</dbReference>
<dbReference type="FunFam" id="1.10.730.10:FF:000005">
    <property type="entry name" value="Methionine--tRNA ligase"/>
    <property type="match status" value="1"/>
</dbReference>
<dbReference type="FunFam" id="2.20.28.20:FF:000001">
    <property type="entry name" value="Methionine--tRNA ligase"/>
    <property type="match status" value="1"/>
</dbReference>
<dbReference type="FunFam" id="2.40.50.140:FF:000042">
    <property type="entry name" value="Methionine--tRNA ligase"/>
    <property type="match status" value="1"/>
</dbReference>
<dbReference type="Gene3D" id="3.40.50.620">
    <property type="entry name" value="HUPs"/>
    <property type="match status" value="1"/>
</dbReference>
<dbReference type="Gene3D" id="1.10.730.10">
    <property type="entry name" value="Isoleucyl-tRNA Synthetase, Domain 1"/>
    <property type="match status" value="1"/>
</dbReference>
<dbReference type="Gene3D" id="2.20.28.20">
    <property type="entry name" value="Methionyl-tRNA synthetase, Zn-domain"/>
    <property type="match status" value="1"/>
</dbReference>
<dbReference type="Gene3D" id="2.40.50.140">
    <property type="entry name" value="Nucleic acid-binding proteins"/>
    <property type="match status" value="1"/>
</dbReference>
<dbReference type="HAMAP" id="MF_00098">
    <property type="entry name" value="Met_tRNA_synth_type1"/>
    <property type="match status" value="1"/>
</dbReference>
<dbReference type="InterPro" id="IPR001412">
    <property type="entry name" value="aa-tRNA-synth_I_CS"/>
</dbReference>
<dbReference type="InterPro" id="IPR041872">
    <property type="entry name" value="Anticodon_Met"/>
</dbReference>
<dbReference type="InterPro" id="IPR004495">
    <property type="entry name" value="Met-tRNA-synth_bsu_C"/>
</dbReference>
<dbReference type="InterPro" id="IPR023458">
    <property type="entry name" value="Met-tRNA_ligase_1"/>
</dbReference>
<dbReference type="InterPro" id="IPR014758">
    <property type="entry name" value="Met-tRNA_synth"/>
</dbReference>
<dbReference type="InterPro" id="IPR015413">
    <property type="entry name" value="Methionyl/Leucyl_tRNA_Synth"/>
</dbReference>
<dbReference type="InterPro" id="IPR033911">
    <property type="entry name" value="MetRS_core"/>
</dbReference>
<dbReference type="InterPro" id="IPR029038">
    <property type="entry name" value="MetRS_Zn"/>
</dbReference>
<dbReference type="InterPro" id="IPR012340">
    <property type="entry name" value="NA-bd_OB-fold"/>
</dbReference>
<dbReference type="InterPro" id="IPR014729">
    <property type="entry name" value="Rossmann-like_a/b/a_fold"/>
</dbReference>
<dbReference type="InterPro" id="IPR002547">
    <property type="entry name" value="tRNA-bd_dom"/>
</dbReference>
<dbReference type="InterPro" id="IPR009080">
    <property type="entry name" value="tRNAsynth_Ia_anticodon-bd"/>
</dbReference>
<dbReference type="NCBIfam" id="TIGR00398">
    <property type="entry name" value="metG"/>
    <property type="match status" value="1"/>
</dbReference>
<dbReference type="NCBIfam" id="TIGR00399">
    <property type="entry name" value="metG_C_term"/>
    <property type="match status" value="1"/>
</dbReference>
<dbReference type="NCBIfam" id="NF001100">
    <property type="entry name" value="PRK00133.1"/>
    <property type="match status" value="1"/>
</dbReference>
<dbReference type="PANTHER" id="PTHR45765">
    <property type="entry name" value="METHIONINE--TRNA LIGASE"/>
    <property type="match status" value="1"/>
</dbReference>
<dbReference type="PANTHER" id="PTHR45765:SF1">
    <property type="entry name" value="METHIONINE--TRNA LIGASE, CYTOPLASMIC"/>
    <property type="match status" value="1"/>
</dbReference>
<dbReference type="Pfam" id="PF19303">
    <property type="entry name" value="Anticodon_3"/>
    <property type="match status" value="1"/>
</dbReference>
<dbReference type="Pfam" id="PF09334">
    <property type="entry name" value="tRNA-synt_1g"/>
    <property type="match status" value="1"/>
</dbReference>
<dbReference type="Pfam" id="PF01588">
    <property type="entry name" value="tRNA_bind"/>
    <property type="match status" value="1"/>
</dbReference>
<dbReference type="PRINTS" id="PR01041">
    <property type="entry name" value="TRNASYNTHMET"/>
</dbReference>
<dbReference type="SUPFAM" id="SSF47323">
    <property type="entry name" value="Anticodon-binding domain of a subclass of class I aminoacyl-tRNA synthetases"/>
    <property type="match status" value="1"/>
</dbReference>
<dbReference type="SUPFAM" id="SSF57770">
    <property type="entry name" value="Methionyl-tRNA synthetase (MetRS), Zn-domain"/>
    <property type="match status" value="1"/>
</dbReference>
<dbReference type="SUPFAM" id="SSF50249">
    <property type="entry name" value="Nucleic acid-binding proteins"/>
    <property type="match status" value="1"/>
</dbReference>
<dbReference type="SUPFAM" id="SSF52374">
    <property type="entry name" value="Nucleotidylyl transferase"/>
    <property type="match status" value="1"/>
</dbReference>
<dbReference type="PROSITE" id="PS00178">
    <property type="entry name" value="AA_TRNA_LIGASE_I"/>
    <property type="match status" value="1"/>
</dbReference>
<dbReference type="PROSITE" id="PS50886">
    <property type="entry name" value="TRBD"/>
    <property type="match status" value="1"/>
</dbReference>
<comment type="function">
    <text evidence="1">Is required not only for elongation of protein synthesis but also for the initiation of all mRNA translation through initiator tRNA(fMet) aminoacylation.</text>
</comment>
<comment type="catalytic activity">
    <reaction evidence="1">
        <text>tRNA(Met) + L-methionine + ATP = L-methionyl-tRNA(Met) + AMP + diphosphate</text>
        <dbReference type="Rhea" id="RHEA:13481"/>
        <dbReference type="Rhea" id="RHEA-COMP:9667"/>
        <dbReference type="Rhea" id="RHEA-COMP:9698"/>
        <dbReference type="ChEBI" id="CHEBI:30616"/>
        <dbReference type="ChEBI" id="CHEBI:33019"/>
        <dbReference type="ChEBI" id="CHEBI:57844"/>
        <dbReference type="ChEBI" id="CHEBI:78442"/>
        <dbReference type="ChEBI" id="CHEBI:78530"/>
        <dbReference type="ChEBI" id="CHEBI:456215"/>
        <dbReference type="EC" id="6.1.1.10"/>
    </reaction>
</comment>
<comment type="cofactor">
    <cofactor evidence="1">
        <name>Zn(2+)</name>
        <dbReference type="ChEBI" id="CHEBI:29105"/>
    </cofactor>
    <text evidence="1">Binds 1 zinc ion per subunit.</text>
</comment>
<comment type="subunit">
    <text evidence="1">Homodimer.</text>
</comment>
<comment type="subcellular location">
    <subcellularLocation>
        <location evidence="1">Cytoplasm</location>
    </subcellularLocation>
</comment>
<comment type="similarity">
    <text evidence="1">Belongs to the class-I aminoacyl-tRNA synthetase family. MetG type 1 subfamily.</text>
</comment>